<protein>
    <recommendedName>
        <fullName>Probable glycosidase CRR1</fullName>
        <ecNumber>3.2.-.-</ecNumber>
    </recommendedName>
    <alternativeName>
        <fullName>CRH-related protein 1</fullName>
    </alternativeName>
</protein>
<gene>
    <name type="primary">CRR1</name>
    <name type="ordered locus">ADR078C</name>
</gene>
<proteinExistence type="inferred from homology"/>
<sequence>MSKRIIQLILLSAFARANYVEPFKSNPYIACSEASHCPKEWPCCSQYGQCGSGPLCISGCNPKFSHSPESCVPVPALLPQLEIVASDDKGVYLEMSGQPALVTKFQRKSSAQLLEVHHEEQQYGVSALEQDLNSRGLIHFPDYMITSKPKVAREMLEQYDFIHSGFISVDGKSESLILGMPKKTTGSLISSSKVFLYGRAAVTMKTSRGPGVITAIVFMSSTQDEIDYEFVGSELHTVQTNYYYQGELNHSRMRRHSLPSNSHEEYHIYEVDWDAERIHWMVDGEIVRTLYKRDTWDPVHKIYKYPQTPMMLQISLWPAGTPDAPQGTIEWAGGLIDWENAPDIKAHGQLAAQIQRVAITPYNNDFCPEIHESMGQWGAQNSEEEPFRVAYGYESNNGRFDPKKLKWYTDARLHLSSWHATGIKPTAAQRQQHHRRSLPHVEAPPITNTM</sequence>
<accession>Q75A41</accession>
<name>CRR1_EREGS</name>
<reference key="1">
    <citation type="journal article" date="2004" name="Science">
        <title>The Ashbya gossypii genome as a tool for mapping the ancient Saccharomyces cerevisiae genome.</title>
        <authorList>
            <person name="Dietrich F.S."/>
            <person name="Voegeli S."/>
            <person name="Brachat S."/>
            <person name="Lerch A."/>
            <person name="Gates K."/>
            <person name="Steiner S."/>
            <person name="Mohr C."/>
            <person name="Poehlmann R."/>
            <person name="Luedi P."/>
            <person name="Choi S."/>
            <person name="Wing R.A."/>
            <person name="Flavier A."/>
            <person name="Gaffney T.D."/>
            <person name="Philippsen P."/>
        </authorList>
    </citation>
    <scope>NUCLEOTIDE SEQUENCE [LARGE SCALE GENOMIC DNA]</scope>
    <source>
        <strain>ATCC 10895 / CBS 109.51 / FGSC 9923 / NRRL Y-1056</strain>
    </source>
</reference>
<reference key="2">
    <citation type="journal article" date="2013" name="G3 (Bethesda)">
        <title>Genomes of Ashbya fungi isolated from insects reveal four mating-type loci, numerous translocations, lack of transposons, and distinct gene duplications.</title>
        <authorList>
            <person name="Dietrich F.S."/>
            <person name="Voegeli S."/>
            <person name="Kuo S."/>
            <person name="Philippsen P."/>
        </authorList>
    </citation>
    <scope>GENOME REANNOTATION</scope>
    <source>
        <strain>ATCC 10895 / CBS 109.51 / FGSC 9923 / NRRL Y-1056</strain>
    </source>
</reference>
<dbReference type="EC" id="3.2.-.-"/>
<dbReference type="EMBL" id="AE016817">
    <property type="protein sequence ID" value="AAS51998.1"/>
    <property type="molecule type" value="Genomic_DNA"/>
</dbReference>
<dbReference type="RefSeq" id="NP_984174.1">
    <property type="nucleotide sequence ID" value="NM_209527.1"/>
</dbReference>
<dbReference type="SMR" id="Q75A41"/>
<dbReference type="FunCoup" id="Q75A41">
    <property type="interactions" value="720"/>
</dbReference>
<dbReference type="STRING" id="284811.Q75A41"/>
<dbReference type="CAZy" id="CBM18">
    <property type="family name" value="Carbohydrate-Binding Module Family 18"/>
</dbReference>
<dbReference type="CAZy" id="GH16">
    <property type="family name" value="Glycoside Hydrolase Family 16"/>
</dbReference>
<dbReference type="EnsemblFungi" id="AAS51998">
    <property type="protein sequence ID" value="AAS51998"/>
    <property type="gene ID" value="AGOS_ADR078C"/>
</dbReference>
<dbReference type="GeneID" id="4620323"/>
<dbReference type="KEGG" id="ago:AGOS_ADR078C"/>
<dbReference type="eggNOG" id="ENOG502QVQI">
    <property type="taxonomic scope" value="Eukaryota"/>
</dbReference>
<dbReference type="HOGENOM" id="CLU_039093_0_0_1"/>
<dbReference type="InParanoid" id="Q75A41"/>
<dbReference type="OMA" id="WPCCSPY"/>
<dbReference type="OrthoDB" id="4781at2759"/>
<dbReference type="Proteomes" id="UP000000591">
    <property type="component" value="Chromosome IV"/>
</dbReference>
<dbReference type="GO" id="GO:0005619">
    <property type="term" value="C:ascospore wall"/>
    <property type="evidence" value="ECO:0007669"/>
    <property type="project" value="EnsemblFungi"/>
</dbReference>
<dbReference type="GO" id="GO:0009277">
    <property type="term" value="C:fungal-type cell wall"/>
    <property type="evidence" value="ECO:0000318"/>
    <property type="project" value="GO_Central"/>
</dbReference>
<dbReference type="GO" id="GO:0016757">
    <property type="term" value="F:glycosyltransferase activity"/>
    <property type="evidence" value="ECO:0000318"/>
    <property type="project" value="GO_Central"/>
</dbReference>
<dbReference type="GO" id="GO:0004553">
    <property type="term" value="F:hydrolase activity, hydrolyzing O-glycosyl compounds"/>
    <property type="evidence" value="ECO:0007669"/>
    <property type="project" value="InterPro"/>
</dbReference>
<dbReference type="GO" id="GO:0030476">
    <property type="term" value="P:ascospore wall assembly"/>
    <property type="evidence" value="ECO:0007669"/>
    <property type="project" value="EnsemblFungi"/>
</dbReference>
<dbReference type="GO" id="GO:0005975">
    <property type="term" value="P:carbohydrate metabolic process"/>
    <property type="evidence" value="ECO:0007669"/>
    <property type="project" value="InterPro"/>
</dbReference>
<dbReference type="GO" id="GO:0006030">
    <property type="term" value="P:chitin metabolic process"/>
    <property type="evidence" value="ECO:0000318"/>
    <property type="project" value="GO_Central"/>
</dbReference>
<dbReference type="GO" id="GO:0031505">
    <property type="term" value="P:fungal-type cell wall organization"/>
    <property type="evidence" value="ECO:0000318"/>
    <property type="project" value="GO_Central"/>
</dbReference>
<dbReference type="CDD" id="cd06923">
    <property type="entry name" value="ChtBD1_GH16"/>
    <property type="match status" value="1"/>
</dbReference>
<dbReference type="CDD" id="cd02183">
    <property type="entry name" value="GH16_fungal_CRH1_transglycosylase"/>
    <property type="match status" value="1"/>
</dbReference>
<dbReference type="FunFam" id="2.60.120.200:FF:000159">
    <property type="entry name" value="Glycosidase"/>
    <property type="match status" value="1"/>
</dbReference>
<dbReference type="Gene3D" id="2.60.120.200">
    <property type="match status" value="1"/>
</dbReference>
<dbReference type="InterPro" id="IPR013320">
    <property type="entry name" value="ConA-like_dom_sf"/>
</dbReference>
<dbReference type="InterPro" id="IPR000757">
    <property type="entry name" value="GH16"/>
</dbReference>
<dbReference type="InterPro" id="IPR050546">
    <property type="entry name" value="Glycosyl_Hydrlase_16"/>
</dbReference>
<dbReference type="PANTHER" id="PTHR10963:SF69">
    <property type="entry name" value="GLYCOSIDASE CRR1-RELATED"/>
    <property type="match status" value="1"/>
</dbReference>
<dbReference type="PANTHER" id="PTHR10963">
    <property type="entry name" value="GLYCOSYL HYDROLASE-RELATED"/>
    <property type="match status" value="1"/>
</dbReference>
<dbReference type="Pfam" id="PF00722">
    <property type="entry name" value="Glyco_hydro_16"/>
    <property type="match status" value="1"/>
</dbReference>
<dbReference type="SUPFAM" id="SSF49899">
    <property type="entry name" value="Concanavalin A-like lectins/glucanases"/>
    <property type="match status" value="1"/>
</dbReference>
<dbReference type="PROSITE" id="PS51762">
    <property type="entry name" value="GH16_2"/>
    <property type="match status" value="1"/>
</dbReference>
<comment type="function">
    <text evidence="1">Spore specific glycosidase involved in spore wall assembly during sporulation. May be involved in copper import (By similarity).</text>
</comment>
<comment type="subcellular location">
    <subcellularLocation>
        <location>Spore wall</location>
    </subcellularLocation>
    <text evidence="1">Spore wall envelope.</text>
</comment>
<comment type="similarity">
    <text evidence="5">Belongs to the glycosyl hydrolase 16 family. CRR1 subfamily.</text>
</comment>
<keyword id="KW-0326">Glycosidase</keyword>
<keyword id="KW-0378">Hydrolase</keyword>
<keyword id="KW-1185">Reference proteome</keyword>
<keyword id="KW-0732">Signal</keyword>
<keyword id="KW-0749">Sporulation</keyword>
<feature type="signal peptide" evidence="2">
    <location>
        <begin position="1"/>
        <end position="17"/>
    </location>
</feature>
<feature type="chain" id="PRO_0000228140" description="Probable glycosidase CRR1">
    <location>
        <begin position="18"/>
        <end position="450"/>
    </location>
</feature>
<feature type="domain" description="GH16" evidence="3">
    <location>
        <begin position="67"/>
        <end position="347"/>
    </location>
</feature>
<feature type="region of interest" description="Disordered" evidence="4">
    <location>
        <begin position="428"/>
        <end position="450"/>
    </location>
</feature>
<feature type="active site" description="Nucleophile" evidence="1">
    <location>
        <position position="225"/>
    </location>
</feature>
<feature type="active site" description="Proton donor" evidence="1">
    <location>
        <position position="229"/>
    </location>
</feature>
<organism>
    <name type="scientific">Eremothecium gossypii (strain ATCC 10895 / CBS 109.51 / FGSC 9923 / NRRL Y-1056)</name>
    <name type="common">Yeast</name>
    <name type="synonym">Ashbya gossypii</name>
    <dbReference type="NCBI Taxonomy" id="284811"/>
    <lineage>
        <taxon>Eukaryota</taxon>
        <taxon>Fungi</taxon>
        <taxon>Dikarya</taxon>
        <taxon>Ascomycota</taxon>
        <taxon>Saccharomycotina</taxon>
        <taxon>Saccharomycetes</taxon>
        <taxon>Saccharomycetales</taxon>
        <taxon>Saccharomycetaceae</taxon>
        <taxon>Eremothecium</taxon>
    </lineage>
</organism>
<evidence type="ECO:0000250" key="1"/>
<evidence type="ECO:0000255" key="2"/>
<evidence type="ECO:0000255" key="3">
    <source>
        <dbReference type="PROSITE-ProRule" id="PRU01098"/>
    </source>
</evidence>
<evidence type="ECO:0000256" key="4">
    <source>
        <dbReference type="SAM" id="MobiDB-lite"/>
    </source>
</evidence>
<evidence type="ECO:0000305" key="5"/>